<dbReference type="BMRB" id="E2R9X2"/>
<dbReference type="SMR" id="E2R9X2"/>
<dbReference type="FunCoup" id="E2R9X2">
    <property type="interactions" value="227"/>
</dbReference>
<dbReference type="STRING" id="9615.ENSCAFP00000037005"/>
<dbReference type="PaxDb" id="9612-ENSCAFP00000019146"/>
<dbReference type="eggNOG" id="KOG2744">
    <property type="taxonomic scope" value="Eukaryota"/>
</dbReference>
<dbReference type="InParanoid" id="E2R9X2"/>
<dbReference type="OrthoDB" id="1938591at2759"/>
<dbReference type="Proteomes" id="UP000002254">
    <property type="component" value="Unplaced"/>
</dbReference>
<dbReference type="Proteomes" id="UP000694429">
    <property type="component" value="Unplaced"/>
</dbReference>
<dbReference type="Proteomes" id="UP000694542">
    <property type="component" value="Unplaced"/>
</dbReference>
<dbReference type="Proteomes" id="UP000805418">
    <property type="component" value="Unplaced"/>
</dbReference>
<dbReference type="GO" id="GO:0005634">
    <property type="term" value="C:nucleus"/>
    <property type="evidence" value="ECO:0000318"/>
    <property type="project" value="GO_Central"/>
</dbReference>
<dbReference type="GO" id="GO:0000976">
    <property type="term" value="F:transcription cis-regulatory region binding"/>
    <property type="evidence" value="ECO:0000250"/>
    <property type="project" value="UniProtKB"/>
</dbReference>
<dbReference type="GO" id="GO:0003713">
    <property type="term" value="F:transcription coactivator activity"/>
    <property type="evidence" value="ECO:0000250"/>
    <property type="project" value="UniProtKB"/>
</dbReference>
<dbReference type="GO" id="GO:0060612">
    <property type="term" value="P:adipose tissue development"/>
    <property type="evidence" value="ECO:0000250"/>
    <property type="project" value="UniProtKB"/>
</dbReference>
<dbReference type="GO" id="GO:0051091">
    <property type="term" value="P:positive regulation of DNA-binding transcription factor activity"/>
    <property type="evidence" value="ECO:0000250"/>
    <property type="project" value="UniProtKB"/>
</dbReference>
<dbReference type="GO" id="GO:0006357">
    <property type="term" value="P:regulation of transcription by RNA polymerase II"/>
    <property type="evidence" value="ECO:0000318"/>
    <property type="project" value="GO_Central"/>
</dbReference>
<dbReference type="CDD" id="cd16885">
    <property type="entry name" value="ARID_ARID5B"/>
    <property type="match status" value="1"/>
</dbReference>
<dbReference type="FunFam" id="1.10.150.60:FF:000004">
    <property type="entry name" value="AT-rich interactive domain-containing protein 5B"/>
    <property type="match status" value="1"/>
</dbReference>
<dbReference type="Gene3D" id="1.10.150.60">
    <property type="entry name" value="ARID DNA-binding domain"/>
    <property type="match status" value="1"/>
</dbReference>
<dbReference type="InterPro" id="IPR051232">
    <property type="entry name" value="ARID/SWI1_ChromRemod"/>
</dbReference>
<dbReference type="InterPro" id="IPR030408">
    <property type="entry name" value="ARID5B_ARID/BRIGHT_DNA-bd"/>
</dbReference>
<dbReference type="InterPro" id="IPR001606">
    <property type="entry name" value="ARID_dom"/>
</dbReference>
<dbReference type="InterPro" id="IPR036431">
    <property type="entry name" value="ARID_dom_sf"/>
</dbReference>
<dbReference type="PANTHER" id="PTHR13964:SF37">
    <property type="entry name" value="AT-RICH INTERACTIVE DOMAIN-CONTAINING PROTEIN 5B"/>
    <property type="match status" value="1"/>
</dbReference>
<dbReference type="PANTHER" id="PTHR13964">
    <property type="entry name" value="RBP-RELATED"/>
    <property type="match status" value="1"/>
</dbReference>
<dbReference type="Pfam" id="PF01388">
    <property type="entry name" value="ARID"/>
    <property type="match status" value="1"/>
</dbReference>
<dbReference type="SMART" id="SM01014">
    <property type="entry name" value="ARID"/>
    <property type="match status" value="1"/>
</dbReference>
<dbReference type="SMART" id="SM00501">
    <property type="entry name" value="BRIGHT"/>
    <property type="match status" value="1"/>
</dbReference>
<dbReference type="SUPFAM" id="SSF46774">
    <property type="entry name" value="ARID-like"/>
    <property type="match status" value="1"/>
</dbReference>
<dbReference type="PROSITE" id="PS51011">
    <property type="entry name" value="ARID"/>
    <property type="match status" value="1"/>
</dbReference>
<keyword id="KW-0010">Activator</keyword>
<keyword id="KW-0238">DNA-binding</keyword>
<keyword id="KW-1017">Isopeptide bond</keyword>
<keyword id="KW-0488">Methylation</keyword>
<keyword id="KW-0539">Nucleus</keyword>
<keyword id="KW-0597">Phosphoprotein</keyword>
<keyword id="KW-1185">Reference proteome</keyword>
<keyword id="KW-0804">Transcription</keyword>
<keyword id="KW-0805">Transcription regulation</keyword>
<keyword id="KW-0832">Ubl conjugation</keyword>
<comment type="function">
    <text evidence="1">Transcription coactivator that binds to the 5'-AATA[CT]-3' core sequence and plays a key role in adipogenesis and liver development. Acts by forming a complex with phosphorylated PHF2, which mediates demethylation at Lys-337, leading to target the PHF2-ARID5B complex to target promoters, where PHF2 mediates demethylation of dimethylated 'Lys-9' of histone H3 (H3K9me2), followed by transcription activation of target genes. The PHF2-ARID5B complex acts as a coactivator of HNF4A in liver. Required for adipogenesis: regulates triglyceride metabolism in adipocytes by regulating expression of adipogenic genes. Overexpression leads to induction of smooth muscle marker genes, suggesting that it may also act as a regulator of smooth muscle cell differentiation and proliferation (By similarity).</text>
</comment>
<comment type="subcellular location">
    <subcellularLocation>
        <location evidence="3">Nucleus</location>
    </subcellularLocation>
</comment>
<comment type="domain">
    <text evidence="1">The ARID domain mediates the interaction with DNA.</text>
</comment>
<comment type="PTM">
    <text evidence="1">Methylation at Lys-337 prevents DNA-binding. Demethylation by PHF2 promotes recruitment of the PHF2-ARID5B complex to promoters (By similarity).</text>
</comment>
<comment type="similarity">
    <text evidence="5">Belongs to the ARID5B family.</text>
</comment>
<accession>E2R9X2</accession>
<organism>
    <name type="scientific">Canis lupus familiaris</name>
    <name type="common">Dog</name>
    <name type="synonym">Canis familiaris</name>
    <dbReference type="NCBI Taxonomy" id="9615"/>
    <lineage>
        <taxon>Eukaryota</taxon>
        <taxon>Metazoa</taxon>
        <taxon>Chordata</taxon>
        <taxon>Craniata</taxon>
        <taxon>Vertebrata</taxon>
        <taxon>Euteleostomi</taxon>
        <taxon>Mammalia</taxon>
        <taxon>Eutheria</taxon>
        <taxon>Laurasiatheria</taxon>
        <taxon>Carnivora</taxon>
        <taxon>Caniformia</taxon>
        <taxon>Canidae</taxon>
        <taxon>Canis</taxon>
    </lineage>
</organism>
<reference key="1">
    <citation type="journal article" date="2005" name="Nature">
        <title>Genome sequence, comparative analysis and haplotype structure of the domestic dog.</title>
        <authorList>
            <person name="Lindblad-Toh K."/>
            <person name="Wade C.M."/>
            <person name="Mikkelsen T.S."/>
            <person name="Karlsson E.K."/>
            <person name="Jaffe D.B."/>
            <person name="Kamal M."/>
            <person name="Clamp M."/>
            <person name="Chang J.L."/>
            <person name="Kulbokas E.J. III"/>
            <person name="Zody M.C."/>
            <person name="Mauceli E."/>
            <person name="Xie X."/>
            <person name="Breen M."/>
            <person name="Wayne R.K."/>
            <person name="Ostrander E.A."/>
            <person name="Ponting C.P."/>
            <person name="Galibert F."/>
            <person name="Smith D.R."/>
            <person name="deJong P.J."/>
            <person name="Kirkness E.F."/>
            <person name="Alvarez P."/>
            <person name="Biagi T."/>
            <person name="Brockman W."/>
            <person name="Butler J."/>
            <person name="Chin C.-W."/>
            <person name="Cook A."/>
            <person name="Cuff J."/>
            <person name="Daly M.J."/>
            <person name="DeCaprio D."/>
            <person name="Gnerre S."/>
            <person name="Grabherr M."/>
            <person name="Kellis M."/>
            <person name="Kleber M."/>
            <person name="Bardeleben C."/>
            <person name="Goodstadt L."/>
            <person name="Heger A."/>
            <person name="Hitte C."/>
            <person name="Kim L."/>
            <person name="Koepfli K.-P."/>
            <person name="Parker H.G."/>
            <person name="Pollinger J.P."/>
            <person name="Searle S.M.J."/>
            <person name="Sutter N.B."/>
            <person name="Thomas R."/>
            <person name="Webber C."/>
            <person name="Baldwin J."/>
            <person name="Abebe A."/>
            <person name="Abouelleil A."/>
            <person name="Aftuck L."/>
            <person name="Ait-Zahra M."/>
            <person name="Aldredge T."/>
            <person name="Allen N."/>
            <person name="An P."/>
            <person name="Anderson S."/>
            <person name="Antoine C."/>
            <person name="Arachchi H."/>
            <person name="Aslam A."/>
            <person name="Ayotte L."/>
            <person name="Bachantsang P."/>
            <person name="Barry A."/>
            <person name="Bayul T."/>
            <person name="Benamara M."/>
            <person name="Berlin A."/>
            <person name="Bessette D."/>
            <person name="Blitshteyn B."/>
            <person name="Bloom T."/>
            <person name="Blye J."/>
            <person name="Boguslavskiy L."/>
            <person name="Bonnet C."/>
            <person name="Boukhgalter B."/>
            <person name="Brown A."/>
            <person name="Cahill P."/>
            <person name="Calixte N."/>
            <person name="Camarata J."/>
            <person name="Cheshatsang Y."/>
            <person name="Chu J."/>
            <person name="Citroen M."/>
            <person name="Collymore A."/>
            <person name="Cooke P."/>
            <person name="Dawoe T."/>
            <person name="Daza R."/>
            <person name="Decktor K."/>
            <person name="DeGray S."/>
            <person name="Dhargay N."/>
            <person name="Dooley K."/>
            <person name="Dooley K."/>
            <person name="Dorje P."/>
            <person name="Dorjee K."/>
            <person name="Dorris L."/>
            <person name="Duffey N."/>
            <person name="Dupes A."/>
            <person name="Egbiremolen O."/>
            <person name="Elong R."/>
            <person name="Falk J."/>
            <person name="Farina A."/>
            <person name="Faro S."/>
            <person name="Ferguson D."/>
            <person name="Ferreira P."/>
            <person name="Fisher S."/>
            <person name="FitzGerald M."/>
            <person name="Foley K."/>
            <person name="Foley C."/>
            <person name="Franke A."/>
            <person name="Friedrich D."/>
            <person name="Gage D."/>
            <person name="Garber M."/>
            <person name="Gearin G."/>
            <person name="Giannoukos G."/>
            <person name="Goode T."/>
            <person name="Goyette A."/>
            <person name="Graham J."/>
            <person name="Grandbois E."/>
            <person name="Gyaltsen K."/>
            <person name="Hafez N."/>
            <person name="Hagopian D."/>
            <person name="Hagos B."/>
            <person name="Hall J."/>
            <person name="Healy C."/>
            <person name="Hegarty R."/>
            <person name="Honan T."/>
            <person name="Horn A."/>
            <person name="Houde N."/>
            <person name="Hughes L."/>
            <person name="Hunnicutt L."/>
            <person name="Husby M."/>
            <person name="Jester B."/>
            <person name="Jones C."/>
            <person name="Kamat A."/>
            <person name="Kanga B."/>
            <person name="Kells C."/>
            <person name="Khazanovich D."/>
            <person name="Kieu A.C."/>
            <person name="Kisner P."/>
            <person name="Kumar M."/>
            <person name="Lance K."/>
            <person name="Landers T."/>
            <person name="Lara M."/>
            <person name="Lee W."/>
            <person name="Leger J.-P."/>
            <person name="Lennon N."/>
            <person name="Leuper L."/>
            <person name="LeVine S."/>
            <person name="Liu J."/>
            <person name="Liu X."/>
            <person name="Lokyitsang Y."/>
            <person name="Lokyitsang T."/>
            <person name="Lui A."/>
            <person name="Macdonald J."/>
            <person name="Major J."/>
            <person name="Marabella R."/>
            <person name="Maru K."/>
            <person name="Matthews C."/>
            <person name="McDonough S."/>
            <person name="Mehta T."/>
            <person name="Meldrim J."/>
            <person name="Melnikov A."/>
            <person name="Meneus L."/>
            <person name="Mihalev A."/>
            <person name="Mihova T."/>
            <person name="Miller K."/>
            <person name="Mittelman R."/>
            <person name="Mlenga V."/>
            <person name="Mulrain L."/>
            <person name="Munson G."/>
            <person name="Navidi A."/>
            <person name="Naylor J."/>
            <person name="Nguyen T."/>
            <person name="Nguyen N."/>
            <person name="Nguyen C."/>
            <person name="Nguyen T."/>
            <person name="Nicol R."/>
            <person name="Norbu N."/>
            <person name="Norbu C."/>
            <person name="Novod N."/>
            <person name="Nyima T."/>
            <person name="Olandt P."/>
            <person name="O'Neill B."/>
            <person name="O'Neill K."/>
            <person name="Osman S."/>
            <person name="Oyono L."/>
            <person name="Patti C."/>
            <person name="Perrin D."/>
            <person name="Phunkhang P."/>
            <person name="Pierre F."/>
            <person name="Priest M."/>
            <person name="Rachupka A."/>
            <person name="Raghuraman S."/>
            <person name="Rameau R."/>
            <person name="Ray V."/>
            <person name="Raymond C."/>
            <person name="Rege F."/>
            <person name="Rise C."/>
            <person name="Rogers J."/>
            <person name="Rogov P."/>
            <person name="Sahalie J."/>
            <person name="Settipalli S."/>
            <person name="Sharpe T."/>
            <person name="Shea T."/>
            <person name="Sheehan M."/>
            <person name="Sherpa N."/>
            <person name="Shi J."/>
            <person name="Shih D."/>
            <person name="Sloan J."/>
            <person name="Smith C."/>
            <person name="Sparrow T."/>
            <person name="Stalker J."/>
            <person name="Stange-Thomann N."/>
            <person name="Stavropoulos S."/>
            <person name="Stone C."/>
            <person name="Stone S."/>
            <person name="Sykes S."/>
            <person name="Tchuinga P."/>
            <person name="Tenzing P."/>
            <person name="Tesfaye S."/>
            <person name="Thoulutsang D."/>
            <person name="Thoulutsang Y."/>
            <person name="Topham K."/>
            <person name="Topping I."/>
            <person name="Tsamla T."/>
            <person name="Vassiliev H."/>
            <person name="Venkataraman V."/>
            <person name="Vo A."/>
            <person name="Wangchuk T."/>
            <person name="Wangdi T."/>
            <person name="Weiand M."/>
            <person name="Wilkinson J."/>
            <person name="Wilson A."/>
            <person name="Yadav S."/>
            <person name="Yang S."/>
            <person name="Yang X."/>
            <person name="Young G."/>
            <person name="Yu Q."/>
            <person name="Zainoun J."/>
            <person name="Zembek L."/>
            <person name="Zimmer A."/>
            <person name="Lander E.S."/>
        </authorList>
    </citation>
    <scope>NUCLEOTIDE SEQUENCE [LARGE SCALE GENOMIC DNA]</scope>
    <source>
        <strain>Boxer</strain>
    </source>
</reference>
<evidence type="ECO:0000250" key="1"/>
<evidence type="ECO:0000250" key="2">
    <source>
        <dbReference type="UniProtKB" id="Q14865"/>
    </source>
</evidence>
<evidence type="ECO:0000255" key="3">
    <source>
        <dbReference type="PROSITE-ProRule" id="PRU00355"/>
    </source>
</evidence>
<evidence type="ECO:0000256" key="4">
    <source>
        <dbReference type="SAM" id="MobiDB-lite"/>
    </source>
</evidence>
<evidence type="ECO:0000305" key="5"/>
<feature type="chain" id="PRO_0000410900" description="AT-rich interactive domain-containing protein 5B">
    <location>
        <begin position="1"/>
        <end position="1187"/>
    </location>
</feature>
<feature type="domain" description="ARID" evidence="3">
    <location>
        <begin position="319"/>
        <end position="411"/>
    </location>
</feature>
<feature type="region of interest" description="Disordered" evidence="4">
    <location>
        <begin position="251"/>
        <end position="279"/>
    </location>
</feature>
<feature type="region of interest" description="Disordered" evidence="4">
    <location>
        <begin position="413"/>
        <end position="611"/>
    </location>
</feature>
<feature type="region of interest" description="Disordered" evidence="4">
    <location>
        <begin position="891"/>
        <end position="977"/>
    </location>
</feature>
<feature type="region of interest" description="Disordered" evidence="4">
    <location>
        <begin position="1032"/>
        <end position="1065"/>
    </location>
</feature>
<feature type="compositionally biased region" description="Basic and acidic residues" evidence="4">
    <location>
        <begin position="447"/>
        <end position="459"/>
    </location>
</feature>
<feature type="compositionally biased region" description="Low complexity" evidence="4">
    <location>
        <begin position="460"/>
        <end position="469"/>
    </location>
</feature>
<feature type="compositionally biased region" description="Basic and acidic residues" evidence="4">
    <location>
        <begin position="512"/>
        <end position="522"/>
    </location>
</feature>
<feature type="compositionally biased region" description="Low complexity" evidence="4">
    <location>
        <begin position="527"/>
        <end position="537"/>
    </location>
</feature>
<feature type="compositionally biased region" description="Basic and acidic residues" evidence="4">
    <location>
        <begin position="1036"/>
        <end position="1048"/>
    </location>
</feature>
<feature type="compositionally biased region" description="Low complexity" evidence="4">
    <location>
        <begin position="1055"/>
        <end position="1065"/>
    </location>
</feature>
<feature type="modified residue" description="Phosphoserine" evidence="2">
    <location>
        <position position="264"/>
    </location>
</feature>
<feature type="modified residue" description="N6,N6-dimethyllysine" evidence="2">
    <location>
        <position position="337"/>
    </location>
</feature>
<feature type="modified residue" description="Phosphoserine" evidence="2">
    <location>
        <position position="1032"/>
    </location>
</feature>
<feature type="modified residue" description="Phosphoserine" evidence="2">
    <location>
        <position position="1132"/>
    </location>
</feature>
<feature type="cross-link" description="Glycyl lysine isopeptide (Lys-Gly) (interchain with G-Cter in SUMO2)" evidence="2">
    <location>
        <position position="130"/>
    </location>
</feature>
<feature type="cross-link" description="Glycyl lysine isopeptide (Lys-Gly) (interchain with G-Cter in SUMO2)" evidence="2">
    <location>
        <position position="446"/>
    </location>
</feature>
<feature type="cross-link" description="Glycyl lysine isopeptide (Lys-Gly) (interchain with G-Cter in SUMO2)" evidence="2">
    <location>
        <position position="494"/>
    </location>
</feature>
<feature type="cross-link" description="Glycyl lysine isopeptide (Lys-Gly) (interchain with G-Cter in SUMO2)" evidence="2">
    <location>
        <position position="496"/>
    </location>
</feature>
<feature type="cross-link" description="Glycyl lysine isopeptide (Lys-Gly) (interchain with G-Cter in SUMO2)" evidence="2">
    <location>
        <position position="767"/>
    </location>
</feature>
<feature type="cross-link" description="Glycyl lysine isopeptide (Lys-Gly) (interchain with G-Cter in SUMO2)" evidence="2">
    <location>
        <position position="774"/>
    </location>
</feature>
<feature type="cross-link" description="Glycyl lysine isopeptide (Lys-Gly) (interchain with G-Cter in SUMO2)" evidence="2">
    <location>
        <position position="803"/>
    </location>
</feature>
<feature type="cross-link" description="Glycyl lysine isopeptide (Lys-Gly) (interchain with G-Cter in SUMO2)" evidence="2">
    <location>
        <position position="810"/>
    </location>
</feature>
<feature type="cross-link" description="Glycyl lysine isopeptide (Lys-Gly) (interchain with G-Cter in SUMO2)" evidence="2">
    <location>
        <position position="893"/>
    </location>
</feature>
<feature type="cross-link" description="Glycyl lysine isopeptide (Lys-Gly) (interchain with G-Cter in SUMO2)" evidence="2">
    <location>
        <position position="916"/>
    </location>
</feature>
<feature type="cross-link" description="Glycyl lysine isopeptide (Lys-Gly) (interchain with G-Cter in SUMO2)" evidence="2">
    <location>
        <position position="920"/>
    </location>
</feature>
<feature type="cross-link" description="Glycyl lysine isopeptide (Lys-Gly) (interchain with G-Cter in SUMO2)" evidence="2">
    <location>
        <position position="935"/>
    </location>
</feature>
<feature type="cross-link" description="Glycyl lysine isopeptide (Lys-Gly) (interchain with G-Cter in SUMO2)" evidence="2">
    <location>
        <position position="988"/>
    </location>
</feature>
<feature type="cross-link" description="Glycyl lysine isopeptide (Lys-Gly) (interchain with G-Cter in SUMO2)" evidence="2">
    <location>
        <position position="1000"/>
    </location>
</feature>
<feature type="cross-link" description="Glycyl lysine isopeptide (Lys-Gly) (interchain with G-Cter in SUMO2)" evidence="2">
    <location>
        <position position="1013"/>
    </location>
</feature>
<feature type="cross-link" description="Glycyl lysine isopeptide (Lys-Gly) (interchain with G-Cter in SUMO2)" evidence="2">
    <location>
        <position position="1055"/>
    </location>
</feature>
<feature type="cross-link" description="Glycyl lysine isopeptide (Lys-Gly) (interchain with G-Cter in SUMO2)" evidence="2">
    <location>
        <position position="1069"/>
    </location>
</feature>
<gene>
    <name type="primary">ARID5B</name>
</gene>
<protein>
    <recommendedName>
        <fullName>AT-rich interactive domain-containing protein 5B</fullName>
        <shortName>ARID domain-containing protein 5B</shortName>
    </recommendedName>
</protein>
<proteinExistence type="inferred from homology"/>
<name>ARI5B_CANLF</name>
<sequence>MEPNSLQWVGSPCGLHGPYIFYKAFQFHLEGKPRILSLGDFFFVRCTPKDPICIAELQLLWEERTSRQLLSSSKLYFLPEDTPQGRNSDHGEDEVIAVSEKVIVKLEDLVKWVHSDFSKWRCGLQAGAVKTTALGRNGQKEALLKYRQSTLNSGLNFKDVLKEKADLGEDEEETNVIVLSYPQYCRYRSMLKRIQDKPPSILTDQFALALGGIAVVSKNPQILYCRDTFDHPTLIENESICDEFAPNLKGRPRKKKPCPQRRDSFSGVKDSNNNSDGKAVAKVKCEARSALSKPKNNHNNCKKVSNEEKPKVAIGEECRADEQAFLVALYKYMKERKTPIERIPYLGFKQINLWTMFQAAQKLGGYETITARRQWKHIYDELGGNPGSTSAATCTRRHYERLILPYERFIKGEEDKPLPPIKPRKQENSSQENENKTKVSGTKRIKHEIPKSKKEKENAPKPQESPEVSSEPEKEQETSNQKSITEPLPAAEGKRKMEGYQDFAARPVGSRADPEKDSDADRGAGGATAAEEAGEQGPVPPLPSAPAAPDRGPALGPGAGKQPLTSPSAPADSKQEPQPCCFAESPDSEPQEPPFPGFPAAQPPLASQSELEEDKLPAMADYIANCTVKVDQLGSDDIHNALKQTPKVLVVQSFDMFKDKDLTGPMNENHGLNYTPLLYSRGNPGIMSPLAKKKLLSQVSGAGLSGSYPYGSPPPLISKKKLIPRDELCSGLPQAHPGQGSDHAAVSRPSVIQHVQSFRSKASEERKGLGDLFKHDKLGRSEPHRCSFSKHHLGPLADSYALKPDAPEGKDKLLEKRALPHAHVPSFLADFYSSPHLHSLYRHAEHHLHAEQTSKYACRDAYRESENSSFPAHKHQEKLHVNYLASLHLQDKKPAPAEAPADEQPTDLSLPKNLHKPTGKVLGLAHAAPGPQESKGAPQFPAGNGQSRDGHPKACRVSPMTLSAPKKYPEPLSRASRPHHVRLESFRKLEGMVHPVLHRKAGPQAVGAARPIKRGLEDLDLVIAGKKARAVSPLDPPKEACGKDKGAELEGEGGKAAAAHGGPAADGHKAALSSPIFPGLYSGSLCGSGLGSRLPAGYSHSLQYLKNQTVLSPLMQPLAFHSLVMQRGIFTSPTNSQQLYRHLAAATPVGSSYGDLLHNSIYPLAAINPQAAFPASQLSSVHPSTKL</sequence>